<comment type="function">
    <text evidence="2">Dioxygenase that catalyzes the first step of DNA base J (beta-d-glucosyl-HOMedU) biosynthesis by converting thymine to 5-hydroxymethyluracil (HOMedU). DNA base J is a hypermodified thymidine residue found in the genome of kinetoplastid parasites, which is localized primarily to repetitive DNA, namely the telomeres, and is implicated in the regulation of antigenic variation. Also specifically binds to base J-containing DNA (J-DNA). Involved in propagation and maintenance of DNA base J synthesis initiated by JBP2 by specifically binding already synthesized DNA base J and propagating J synthesis. Thymine dioxygenase activity and J-DNA-binding are independent functions (By similarity).</text>
</comment>
<comment type="catalytic activity">
    <reaction evidence="2">
        <text>thymine + 2-oxoglutarate + O2 = 5-hydroxymethyluracil + succinate + CO2</text>
        <dbReference type="Rhea" id="RHEA:10316"/>
        <dbReference type="ChEBI" id="CHEBI:15379"/>
        <dbReference type="ChEBI" id="CHEBI:16526"/>
        <dbReference type="ChEBI" id="CHEBI:16810"/>
        <dbReference type="ChEBI" id="CHEBI:16964"/>
        <dbReference type="ChEBI" id="CHEBI:17821"/>
        <dbReference type="ChEBI" id="CHEBI:30031"/>
        <dbReference type="EC" id="1.14.11.6"/>
    </reaction>
</comment>
<comment type="cofactor">
    <cofactor evidence="1">
        <name>Fe(2+)</name>
        <dbReference type="ChEBI" id="CHEBI:29033"/>
    </cofactor>
    <text evidence="1">Binds 1 Fe(2+) ion per subunit.</text>
</comment>
<comment type="subunit">
    <text evidence="2">Monomer. Binds to DNA as a monomer (By similarity).</text>
</comment>
<comment type="subcellular location">
    <subcellularLocation>
        <location evidence="2">Nucleus</location>
    </subcellularLocation>
</comment>
<comment type="domain">
    <text evidence="2">The DNA-binding JBP1 domain (DB-JBP1) is necessary and sufficient for binding to J-DNA.</text>
</comment>
<comment type="similarity">
    <text evidence="3">Belongs to the TET family. JBP1 subfamily.</text>
</comment>
<accession>A4HU70</accession>
<evidence type="ECO:0000250" key="1">
    <source>
        <dbReference type="UniProtKB" id="Q6N021"/>
    </source>
</evidence>
<evidence type="ECO:0000250" key="2">
    <source>
        <dbReference type="UniProtKB" id="Q9U6M1"/>
    </source>
</evidence>
<evidence type="ECO:0000305" key="3"/>
<reference key="1">
    <citation type="journal article" date="2007" name="Nat. Genet.">
        <title>Comparative genomic analysis of three Leishmania species that cause diverse human disease.</title>
        <authorList>
            <person name="Peacock C.S."/>
            <person name="Seeger K."/>
            <person name="Harris D."/>
            <person name="Murphy L."/>
            <person name="Ruiz J.C."/>
            <person name="Quail M.A."/>
            <person name="Peters N."/>
            <person name="Adlem E."/>
            <person name="Tivey A."/>
            <person name="Aslett M."/>
            <person name="Kerhornou A."/>
            <person name="Ivens A."/>
            <person name="Fraser A."/>
            <person name="Rajandream M.-A."/>
            <person name="Carver T."/>
            <person name="Norbertczak H."/>
            <person name="Chillingworth T."/>
            <person name="Hance Z."/>
            <person name="Jagels K."/>
            <person name="Moule S."/>
            <person name="Ormond D."/>
            <person name="Rutter S."/>
            <person name="Sqaures R."/>
            <person name="Whitehead S."/>
            <person name="Rabbinowitsch E."/>
            <person name="Arrowsmith C."/>
            <person name="White B."/>
            <person name="Thurston S."/>
            <person name="Bringaud F."/>
            <person name="Baldauf S.L."/>
            <person name="Faulconbridge A."/>
            <person name="Jeffares D."/>
            <person name="Depledge D.P."/>
            <person name="Oyola S.O."/>
            <person name="Hilley J.D."/>
            <person name="Brito L.O."/>
            <person name="Tosi L.R.O."/>
            <person name="Barrell B."/>
            <person name="Cruz A.K."/>
            <person name="Mottram J.C."/>
            <person name="Smith D.F."/>
            <person name="Berriman M."/>
        </authorList>
    </citation>
    <scope>NUCLEOTIDE SEQUENCE [LARGE SCALE GENOMIC DNA]</scope>
    <source>
        <strain>JPCM5</strain>
    </source>
</reference>
<name>JBP1_LEIIN</name>
<sequence>MEPDPKKVKLDIFDFPTARETRTPEEVAESYAEAVKSHPFYDNVHSAIDFYDSGTIKDGRGQIIGVVLREALPKYAASMASELLASAAVRTSLRSMMFGGESPLSGIAGYFDYRGSPVELKSRKTSFTYEHEAAWPAVFPVVDYVSELYRHVAPERWKAQNDAIPDVVRIHGTPFSTLTINSRFRTASHTDVGDFDGGYSCIACLDGQFKGLALAFDDFGINVLMQPRDVMIFDSHHFHSNTEVELSFSGEDWKRLTCVFYYRAALGEPASYAEYRRRLEKSKQDTSFTPVVSNVRVKENGTNLNRPSPVYPIFLSPFWVPMVAHCLQHCASEAQCVHDAMTADGSRLAEVMFGEPLSTSDGIPLRGEEEKLKANSDSASRPLSRLGGFSETNLMVSTAVEKKKYLNSEFLSHFISAQLLDMWKQARGKWLELVGREWTHMLALNPERKDFLWRNQSEMNSAFFDLCEVGKQVMLGLLGKEAALPKEEQAFWTMYAVHLNAACAEELNMPHVAMSLRKLNVKLKDFNFGGTRYFKDMPPEEQKRRMERKQRIEEARRHGMSSGAHEKRANWLTNDSFDYQTEDCVFDYAQHKWVPPALHAKEITKNVRSGELPTREGVVRVLVVLPDPQSKVDCVDCKLEVSETVRCSCEWERLMSSPAVHRVLAAAQRNLQLPDSVTHDNIEIRFAFHSRLPTDMCDFVVLQHVLSCIPDDVLASAYIRRSAALCSGCVFVVETDVQCRQYYTLKCSVRCDYDAVAPLFFQQLHRVSYGTKAARVRTKGELESLIPTVCCARYKLQGSPLNTTVHVVAPAPPR</sequence>
<proteinExistence type="inferred from homology"/>
<keyword id="KW-0223">Dioxygenase</keyword>
<keyword id="KW-0238">DNA-binding</keyword>
<keyword id="KW-0408">Iron</keyword>
<keyword id="KW-0479">Metal-binding</keyword>
<keyword id="KW-0539">Nucleus</keyword>
<keyword id="KW-0560">Oxidoreductase</keyword>
<keyword id="KW-1185">Reference proteome</keyword>
<feature type="chain" id="PRO_0000377552" description="Thymine dioxygenase JBP1">
    <location>
        <begin position="1"/>
        <end position="814"/>
    </location>
</feature>
<feature type="region of interest" description="Thymine dioxygenase" evidence="2">
    <location>
        <begin position="62"/>
        <end position="264"/>
    </location>
</feature>
<feature type="region of interest" description="DNA-binding JBP1 domain" evidence="2">
    <location>
        <begin position="392"/>
        <end position="561"/>
    </location>
</feature>
<feature type="binding site" evidence="1">
    <location>
        <position position="189"/>
    </location>
    <ligand>
        <name>Fe cation</name>
        <dbReference type="ChEBI" id="CHEBI:24875"/>
        <note>catalytic</note>
    </ligand>
</feature>
<feature type="binding site" evidence="1">
    <location>
        <position position="191"/>
    </location>
    <ligand>
        <name>Fe cation</name>
        <dbReference type="ChEBI" id="CHEBI:24875"/>
        <note>catalytic</note>
    </ligand>
</feature>
<feature type="binding site" evidence="1">
    <location>
        <position position="239"/>
    </location>
    <ligand>
        <name>Fe cation</name>
        <dbReference type="ChEBI" id="CHEBI:24875"/>
        <note>catalytic</note>
    </ligand>
</feature>
<feature type="binding site" evidence="1">
    <location>
        <position position="255"/>
    </location>
    <ligand>
        <name>2-oxoglutarate</name>
        <dbReference type="ChEBI" id="CHEBI:16810"/>
    </ligand>
</feature>
<feature type="site" description="Involved in J base recognition, conferring specificity towards J-DNA" evidence="2">
    <location>
        <position position="525"/>
    </location>
</feature>
<dbReference type="EC" id="1.14.11.6" evidence="2"/>
<dbReference type="EMBL" id="FR796441">
    <property type="protein sequence ID" value="CAM65977.1"/>
    <property type="molecule type" value="Genomic_DNA"/>
</dbReference>
<dbReference type="RefSeq" id="XP_001463611.1">
    <property type="nucleotide sequence ID" value="XM_001463574.1"/>
</dbReference>
<dbReference type="SMR" id="A4HU70"/>
<dbReference type="STRING" id="5671.A4HU70"/>
<dbReference type="GeneID" id="5066971"/>
<dbReference type="KEGG" id="lif:LINJ_09_1560"/>
<dbReference type="VEuPathDB" id="TriTrypDB:LINF_090022400"/>
<dbReference type="eggNOG" id="ENOG502RTYX">
    <property type="taxonomic scope" value="Eukaryota"/>
</dbReference>
<dbReference type="InParanoid" id="A4HU70"/>
<dbReference type="OMA" id="LCEVGKQ"/>
<dbReference type="Proteomes" id="UP000008153">
    <property type="component" value="Chromosome 9"/>
</dbReference>
<dbReference type="GO" id="GO:0005634">
    <property type="term" value="C:nucleus"/>
    <property type="evidence" value="ECO:0007669"/>
    <property type="project" value="UniProtKB-SubCell"/>
</dbReference>
<dbReference type="GO" id="GO:0003677">
    <property type="term" value="F:DNA binding"/>
    <property type="evidence" value="ECO:0007669"/>
    <property type="project" value="UniProtKB-KW"/>
</dbReference>
<dbReference type="GO" id="GO:0046872">
    <property type="term" value="F:metal ion binding"/>
    <property type="evidence" value="ECO:0007669"/>
    <property type="project" value="UniProtKB-KW"/>
</dbReference>
<dbReference type="GO" id="GO:0050341">
    <property type="term" value="F:thymine dioxygenase activity"/>
    <property type="evidence" value="ECO:0007669"/>
    <property type="project" value="UniProtKB-EC"/>
</dbReference>
<dbReference type="GO" id="GO:0070580">
    <property type="term" value="P:base J metabolic process"/>
    <property type="evidence" value="ECO:0007669"/>
    <property type="project" value="UniProtKB-ARBA"/>
</dbReference>
<dbReference type="CDD" id="cd20332">
    <property type="entry name" value="JBP"/>
    <property type="match status" value="1"/>
</dbReference>
<dbReference type="FunFam" id="1.20.120.1440:FF:000001">
    <property type="entry name" value="Thymine dioxygenase JBP1"/>
    <property type="match status" value="1"/>
</dbReference>
<dbReference type="FunFam" id="3.60.130.30:FF:000002">
    <property type="entry name" value="Thymine dioxygenase JBP1"/>
    <property type="match status" value="1"/>
</dbReference>
<dbReference type="Gene3D" id="3.60.130.30">
    <property type="match status" value="1"/>
</dbReference>
<dbReference type="Gene3D" id="1.20.120.1440">
    <property type="entry name" value="JBP1, DNA-binding domain"/>
    <property type="match status" value="1"/>
</dbReference>
<dbReference type="InterPro" id="IPR024779">
    <property type="entry name" value="2OGFeDO_JBP1/TET_oxygenase_dom"/>
</dbReference>
<dbReference type="InterPro" id="IPR041241">
    <property type="entry name" value="DB_JBP1"/>
</dbReference>
<dbReference type="InterPro" id="IPR043111">
    <property type="entry name" value="DB_JBP1_sf"/>
</dbReference>
<dbReference type="Pfam" id="PF18526">
    <property type="entry name" value="DB_JBP1"/>
    <property type="match status" value="1"/>
</dbReference>
<dbReference type="Pfam" id="PF12851">
    <property type="entry name" value="Tet_JBP"/>
    <property type="match status" value="1"/>
</dbReference>
<organism>
    <name type="scientific">Leishmania infantum</name>
    <dbReference type="NCBI Taxonomy" id="5671"/>
    <lineage>
        <taxon>Eukaryota</taxon>
        <taxon>Discoba</taxon>
        <taxon>Euglenozoa</taxon>
        <taxon>Kinetoplastea</taxon>
        <taxon>Metakinetoplastina</taxon>
        <taxon>Trypanosomatida</taxon>
        <taxon>Trypanosomatidae</taxon>
        <taxon>Leishmaniinae</taxon>
        <taxon>Leishmania</taxon>
    </lineage>
</organism>
<gene>
    <name type="primary">JBP1</name>
    <name type="ORF">LinJ09.1540</name>
    <name type="ORF">LinJ_09_1560</name>
</gene>
<protein>
    <recommendedName>
        <fullName>Thymine dioxygenase JBP1</fullName>
        <ecNumber evidence="2">1.14.11.6</ecNumber>
    </recommendedName>
    <alternativeName>
        <fullName>J-binding protein 1</fullName>
    </alternativeName>
    <alternativeName>
        <fullName>Thymidine hydroxylase JBP1</fullName>
    </alternativeName>
</protein>